<accession>A4JEW8</accession>
<organism>
    <name type="scientific">Burkholderia vietnamiensis (strain G4 / LMG 22486)</name>
    <name type="common">Burkholderia cepacia (strain R1808)</name>
    <dbReference type="NCBI Taxonomy" id="269482"/>
    <lineage>
        <taxon>Bacteria</taxon>
        <taxon>Pseudomonadati</taxon>
        <taxon>Pseudomonadota</taxon>
        <taxon>Betaproteobacteria</taxon>
        <taxon>Burkholderiales</taxon>
        <taxon>Burkholderiaceae</taxon>
        <taxon>Burkholderia</taxon>
        <taxon>Burkholderia cepacia complex</taxon>
    </lineage>
</organism>
<name>KTHY_BURVG</name>
<proteinExistence type="inferred from homology"/>
<keyword id="KW-0067">ATP-binding</keyword>
<keyword id="KW-0418">Kinase</keyword>
<keyword id="KW-0545">Nucleotide biosynthesis</keyword>
<keyword id="KW-0547">Nucleotide-binding</keyword>
<keyword id="KW-0808">Transferase</keyword>
<comment type="function">
    <text evidence="1">Phosphorylation of dTMP to form dTDP in both de novo and salvage pathways of dTTP synthesis.</text>
</comment>
<comment type="catalytic activity">
    <reaction evidence="1">
        <text>dTMP + ATP = dTDP + ADP</text>
        <dbReference type="Rhea" id="RHEA:13517"/>
        <dbReference type="ChEBI" id="CHEBI:30616"/>
        <dbReference type="ChEBI" id="CHEBI:58369"/>
        <dbReference type="ChEBI" id="CHEBI:63528"/>
        <dbReference type="ChEBI" id="CHEBI:456216"/>
        <dbReference type="EC" id="2.7.4.9"/>
    </reaction>
</comment>
<comment type="similarity">
    <text evidence="1">Belongs to the thymidylate kinase family.</text>
</comment>
<feature type="chain" id="PRO_1000023166" description="Thymidylate kinase">
    <location>
        <begin position="1"/>
        <end position="206"/>
    </location>
</feature>
<feature type="binding site" evidence="1">
    <location>
        <begin position="11"/>
        <end position="18"/>
    </location>
    <ligand>
        <name>ATP</name>
        <dbReference type="ChEBI" id="CHEBI:30616"/>
    </ligand>
</feature>
<sequence>MARGKFITFEGIDGAGKTTHLQWFCERLQAKLAAGDRQVVVTREPGGTPLGEALREMLLNQPMDLETEALLMFAARREHLARVIEPALARGDWVVSDRFTDATFAYQGGGRGLPRDKLEALERWVQGGFQPDLTVLFDVAPQVASERRGAARAPDKFESETDAFFTRTRDEYLRRAQEAPHRFTIVDATQTIPEIRGRLERVLAAL</sequence>
<gene>
    <name evidence="1" type="primary">tmk</name>
    <name type="ordered locus">Bcep1808_1817</name>
</gene>
<dbReference type="EC" id="2.7.4.9" evidence="1"/>
<dbReference type="EMBL" id="CP000614">
    <property type="protein sequence ID" value="ABO54821.1"/>
    <property type="molecule type" value="Genomic_DNA"/>
</dbReference>
<dbReference type="SMR" id="A4JEW8"/>
<dbReference type="KEGG" id="bvi:Bcep1808_1817"/>
<dbReference type="eggNOG" id="COG0125">
    <property type="taxonomic scope" value="Bacteria"/>
</dbReference>
<dbReference type="HOGENOM" id="CLU_049131_0_2_4"/>
<dbReference type="Proteomes" id="UP000002287">
    <property type="component" value="Chromosome 1"/>
</dbReference>
<dbReference type="GO" id="GO:0005829">
    <property type="term" value="C:cytosol"/>
    <property type="evidence" value="ECO:0007669"/>
    <property type="project" value="TreeGrafter"/>
</dbReference>
<dbReference type="GO" id="GO:0005524">
    <property type="term" value="F:ATP binding"/>
    <property type="evidence" value="ECO:0007669"/>
    <property type="project" value="UniProtKB-UniRule"/>
</dbReference>
<dbReference type="GO" id="GO:0004798">
    <property type="term" value="F:dTMP kinase activity"/>
    <property type="evidence" value="ECO:0007669"/>
    <property type="project" value="UniProtKB-UniRule"/>
</dbReference>
<dbReference type="GO" id="GO:0006233">
    <property type="term" value="P:dTDP biosynthetic process"/>
    <property type="evidence" value="ECO:0007669"/>
    <property type="project" value="InterPro"/>
</dbReference>
<dbReference type="GO" id="GO:0006235">
    <property type="term" value="P:dTTP biosynthetic process"/>
    <property type="evidence" value="ECO:0007669"/>
    <property type="project" value="UniProtKB-UniRule"/>
</dbReference>
<dbReference type="GO" id="GO:0006227">
    <property type="term" value="P:dUDP biosynthetic process"/>
    <property type="evidence" value="ECO:0007669"/>
    <property type="project" value="TreeGrafter"/>
</dbReference>
<dbReference type="CDD" id="cd01672">
    <property type="entry name" value="TMPK"/>
    <property type="match status" value="1"/>
</dbReference>
<dbReference type="FunFam" id="3.40.50.300:FF:000225">
    <property type="entry name" value="Thymidylate kinase"/>
    <property type="match status" value="1"/>
</dbReference>
<dbReference type="Gene3D" id="3.40.50.300">
    <property type="entry name" value="P-loop containing nucleotide triphosphate hydrolases"/>
    <property type="match status" value="1"/>
</dbReference>
<dbReference type="HAMAP" id="MF_00165">
    <property type="entry name" value="Thymidylate_kinase"/>
    <property type="match status" value="1"/>
</dbReference>
<dbReference type="InterPro" id="IPR027417">
    <property type="entry name" value="P-loop_NTPase"/>
</dbReference>
<dbReference type="InterPro" id="IPR039430">
    <property type="entry name" value="Thymidylate_kin-like_dom"/>
</dbReference>
<dbReference type="InterPro" id="IPR018094">
    <property type="entry name" value="Thymidylate_kinase"/>
</dbReference>
<dbReference type="NCBIfam" id="TIGR00041">
    <property type="entry name" value="DTMP_kinase"/>
    <property type="match status" value="1"/>
</dbReference>
<dbReference type="PANTHER" id="PTHR10344">
    <property type="entry name" value="THYMIDYLATE KINASE"/>
    <property type="match status" value="1"/>
</dbReference>
<dbReference type="PANTHER" id="PTHR10344:SF4">
    <property type="entry name" value="UMP-CMP KINASE 2, MITOCHONDRIAL"/>
    <property type="match status" value="1"/>
</dbReference>
<dbReference type="Pfam" id="PF02223">
    <property type="entry name" value="Thymidylate_kin"/>
    <property type="match status" value="1"/>
</dbReference>
<dbReference type="SUPFAM" id="SSF52540">
    <property type="entry name" value="P-loop containing nucleoside triphosphate hydrolases"/>
    <property type="match status" value="1"/>
</dbReference>
<protein>
    <recommendedName>
        <fullName evidence="1">Thymidylate kinase</fullName>
        <ecNumber evidence="1">2.7.4.9</ecNumber>
    </recommendedName>
    <alternativeName>
        <fullName evidence="1">dTMP kinase</fullName>
    </alternativeName>
</protein>
<evidence type="ECO:0000255" key="1">
    <source>
        <dbReference type="HAMAP-Rule" id="MF_00165"/>
    </source>
</evidence>
<reference key="1">
    <citation type="submission" date="2007-03" db="EMBL/GenBank/DDBJ databases">
        <title>Complete sequence of chromosome 1 of Burkholderia vietnamiensis G4.</title>
        <authorList>
            <consortium name="US DOE Joint Genome Institute"/>
            <person name="Copeland A."/>
            <person name="Lucas S."/>
            <person name="Lapidus A."/>
            <person name="Barry K."/>
            <person name="Detter J.C."/>
            <person name="Glavina del Rio T."/>
            <person name="Hammon N."/>
            <person name="Israni S."/>
            <person name="Dalin E."/>
            <person name="Tice H."/>
            <person name="Pitluck S."/>
            <person name="Chain P."/>
            <person name="Malfatti S."/>
            <person name="Shin M."/>
            <person name="Vergez L."/>
            <person name="Schmutz J."/>
            <person name="Larimer F."/>
            <person name="Land M."/>
            <person name="Hauser L."/>
            <person name="Kyrpides N."/>
            <person name="Tiedje J."/>
            <person name="Richardson P."/>
        </authorList>
    </citation>
    <scope>NUCLEOTIDE SEQUENCE [LARGE SCALE GENOMIC DNA]</scope>
    <source>
        <strain>G4 / LMG 22486</strain>
    </source>
</reference>